<feature type="chain" id="PRO_0000249872" description="Small nuclear ribonucleoprotein-associated protein B'">
    <location>
        <begin position="1"/>
        <end position="240"/>
    </location>
</feature>
<feature type="domain" description="Sm" evidence="4">
    <location>
        <begin position="4"/>
        <end position="86"/>
    </location>
</feature>
<feature type="repeat">
    <location>
        <begin position="175"/>
        <end position="181"/>
    </location>
</feature>
<feature type="repeat">
    <location>
        <begin position="191"/>
        <end position="196"/>
    </location>
</feature>
<feature type="repeat">
    <location>
        <begin position="216"/>
        <end position="221"/>
    </location>
</feature>
<feature type="repeat">
    <location>
        <begin position="222"/>
        <end position="228"/>
    </location>
</feature>
<feature type="repeat">
    <location>
        <begin position="230"/>
        <end position="236"/>
    </location>
</feature>
<feature type="region of interest" description="Disordered" evidence="5">
    <location>
        <begin position="161"/>
        <end position="240"/>
    </location>
</feature>
<feature type="region of interest" description="Repeat-rich region">
    <location>
        <begin position="175"/>
        <end position="236"/>
    </location>
</feature>
<feature type="compositionally biased region" description="Pro residues" evidence="5">
    <location>
        <begin position="172"/>
        <end position="205"/>
    </location>
</feature>
<feature type="compositionally biased region" description="Pro residues" evidence="5">
    <location>
        <begin position="214"/>
        <end position="240"/>
    </location>
</feature>
<feature type="modified residue" description="Asymmetric dimethylarginine; alternate" evidence="1">
    <location>
        <position position="108"/>
    </location>
</feature>
<feature type="modified residue" description="Dimethylated arginine; alternate" evidence="1">
    <location>
        <position position="108"/>
    </location>
</feature>
<feature type="modified residue" description="Omega-N-methylarginine; alternate" evidence="1">
    <location>
        <position position="108"/>
    </location>
</feature>
<feature type="modified residue" description="Asymmetric dimethylarginine; alternate" evidence="1">
    <location>
        <position position="112"/>
    </location>
</feature>
<feature type="modified residue" description="Dimethylated arginine; alternate" evidence="1">
    <location>
        <position position="112"/>
    </location>
</feature>
<feature type="modified residue" description="Omega-N-methylarginine; alternate" evidence="1">
    <location>
        <position position="112"/>
    </location>
</feature>
<feature type="modified residue" description="Omega-N-methylarginine" evidence="1">
    <location>
        <position position="147"/>
    </location>
</feature>
<feature type="modified residue" description="Omega-N-methylarginine" evidence="3">
    <location>
        <position position="172"/>
    </location>
</feature>
<reference key="1">
    <citation type="journal article" date="1999" name="Nucleic Acids Res.">
        <title>Concerted regulation and molecular evolution of the duplicated SNRPB'/B and SNRPN loci.</title>
        <authorList>
            <person name="Gray T.A."/>
            <person name="Smithwick M.J."/>
            <person name="Schaldach M.A."/>
            <person name="Martone D.L."/>
            <person name="Graves J.A."/>
            <person name="McCarrey J.R."/>
            <person name="Nicholls R.D."/>
        </authorList>
    </citation>
    <scope>NUCLEOTIDE SEQUENCE [MRNA]</scope>
</reference>
<organism>
    <name type="scientific">Notamacropus eugenii</name>
    <name type="common">Tammar wallaby</name>
    <name type="synonym">Macropus eugenii</name>
    <dbReference type="NCBI Taxonomy" id="9315"/>
    <lineage>
        <taxon>Eukaryota</taxon>
        <taxon>Metazoa</taxon>
        <taxon>Chordata</taxon>
        <taxon>Craniata</taxon>
        <taxon>Vertebrata</taxon>
        <taxon>Euteleostomi</taxon>
        <taxon>Mammalia</taxon>
        <taxon>Metatheria</taxon>
        <taxon>Diprotodontia</taxon>
        <taxon>Macropodidae</taxon>
        <taxon>Notamacropus</taxon>
    </lineage>
</organism>
<gene>
    <name type="primary">SNRPB</name>
</gene>
<evidence type="ECO:0000250" key="1">
    <source>
        <dbReference type="UniProtKB" id="P14678"/>
    </source>
</evidence>
<evidence type="ECO:0000250" key="2">
    <source>
        <dbReference type="UniProtKB" id="P27048"/>
    </source>
</evidence>
<evidence type="ECO:0000250" key="3">
    <source>
        <dbReference type="UniProtKB" id="P63162"/>
    </source>
</evidence>
<evidence type="ECO:0000255" key="4">
    <source>
        <dbReference type="PROSITE-ProRule" id="PRU01346"/>
    </source>
</evidence>
<evidence type="ECO:0000256" key="5">
    <source>
        <dbReference type="SAM" id="MobiDB-lite"/>
    </source>
</evidence>
<evidence type="ECO:0000305" key="6"/>
<protein>
    <recommendedName>
        <fullName>Small nuclear ribonucleoprotein-associated protein B'</fullName>
        <shortName>snRNP-B'</shortName>
        <shortName>snRPB'</shortName>
    </recommendedName>
    <alternativeName>
        <fullName>Sm protein B'</fullName>
        <shortName>Sm-B'</shortName>
        <shortName>SmB'</shortName>
    </alternativeName>
</protein>
<comment type="function">
    <text evidence="1">Plays a role in pre-mRNA splicing as a core component of the spliceosomal U1, U2, U4 and U5 small nuclear ribonucleoproteins (snRNPs), the building blocks of the spliceosome (By similarity). Component of both the pre-catalytic spliceosome B complex and activated spliceosome C complexes (By similarity). As a component of the minor spliceosome, involved in the splicing of U12-type introns in pre-mRNAs (By similarity). As part of the U7 snRNP it is involved in histone pre-mRNA 3'-end processing (By similarity).</text>
</comment>
<comment type="subunit">
    <text evidence="1 2">Core component of the spliceosomal U1, U2, U4 and U5 small nuclear ribonucleoproteins (snRNPs), the building blocks of the spliceosome (By similarity). Most spliceosomal snRNPs contain a common set of Sm proteins, SNRPB, SNRPD1, SNRPD2, SNRPD3, SNRPE, SNRPF and SNRPG that assemble in a heptameric protein ring on the Sm site of the small nuclear RNA to form the core snRNP (By similarity). Component of the U1 snRNP (By similarity). The U1 snRNP is composed of the U1 snRNA and the 7 core Sm proteins SNRPB, SNRPD1, SNRPD2, SNRPD3, SNRPE, SNRPF and SNRPG, and at least three U1 snRNP-specific proteins SNRNP70/U1-70K, SNRPA/U1-A and SNRPC/U1-C (By similarity). Component of the U4/U6-U5 tri-snRNP complex composed of the U4, U6 and U5 snRNAs and at least PRPF3, PRPF4, PRPF6, PRPF8, PRPF31, SNRNP200, TXNL4A, SNRNP40, SNRPB, SNRPD1, SNRPD2, SNRPD3, SNRPE, SNRPF, SNRPG, DDX23, CD2BP2, PPIH, SNU13, EFTUD2, SART1 and USP39, plus LSM2, LSM3, LSM4, LSM5, LSM6, LSM7 and LSM8 (By similarity). Component of the U7 snRNP complex, or U7 Sm protein core complex, that is composed of the U7 snRNA and at least LSM10, LSM11, SNRPB, SNRPD3, SNRPE, SNRPF and SNRPG; the complex does not contain SNRPD1 and SNRPD2 (By similarity). Component of the minor spliceosome, which splices U12-type introns (By similarity). Part of the SMN-Sm complex that contains SMN1, GEMIN2/SIP1, DDX20/GEMIN3, GEMIN4, GEMIN5, GEMIN6, GEMIN7, GEMIN8, STRAP/UNRIP and the Sm proteins SNRPB, SNRPD1, SNRPD2, SNRPD3, SNRPE, SNRPF and SNRPG; catalyzes core snRNPs assembly (By similarity). Forms a 6S pICln-Sm complex composed of CLNS1A/pICln, SNRPD1, SNRPD2, SNRPE, SNRPF and SNRPG; ring-like structure where CLNS1A/pICln mimics additional Sm proteins and which is unable to assemble into the core snRNP (By similarity). Identified in a histone pre-mRNA complex, at least composed of ERI1, LSM11, SLBP, SNRPB, SYNCRIP and YBX1 (By similarity). Interacts with TDRD3 and SNUPN (By similarity). Interacts with PRMT5; interaction leads to its symmetric arginine dimethylation (By similarity). Interacts with TDRD6; interaction promotes association with PRMT5 (By similarity). Interacts with SMN1; the interaction is direct (By similarity).</text>
</comment>
<comment type="subcellular location">
    <subcellularLocation>
        <location evidence="1">Cytoplasm</location>
        <location evidence="1">Cytosol</location>
    </subcellularLocation>
    <subcellularLocation>
        <location evidence="1">Nucleus</location>
    </subcellularLocation>
    <text evidence="1">SMN-mediated assembly into core snRNPs occurs in the cytosol before SMN-mediated transport to the nucleus to be included in spliceosomes.</text>
</comment>
<comment type="PTM">
    <text evidence="1 2">Methylated by PRMT5 (By similarity). Arg-108 and Arg-112 are dimethylated, probably to asymmetric dimethylarginine (By similarity).</text>
</comment>
<comment type="similarity">
    <text evidence="6">Belongs to the snRNP SmB/SmN family.</text>
</comment>
<accession>Q9N1Q0</accession>
<dbReference type="EMBL" id="AF176323">
    <property type="protein sequence ID" value="AAF40115.1"/>
    <property type="molecule type" value="mRNA"/>
</dbReference>
<dbReference type="SMR" id="Q9N1Q0"/>
<dbReference type="HOGENOM" id="CLU_076902_1_0_1"/>
<dbReference type="GO" id="GO:0005829">
    <property type="term" value="C:cytosol"/>
    <property type="evidence" value="ECO:0000250"/>
    <property type="project" value="UniProtKB"/>
</dbReference>
<dbReference type="GO" id="GO:0034709">
    <property type="term" value="C:methylosome"/>
    <property type="evidence" value="ECO:0000250"/>
    <property type="project" value="UniProtKB"/>
</dbReference>
<dbReference type="GO" id="GO:0016607">
    <property type="term" value="C:nuclear speck"/>
    <property type="evidence" value="ECO:0007669"/>
    <property type="project" value="TreeGrafter"/>
</dbReference>
<dbReference type="GO" id="GO:0005634">
    <property type="term" value="C:nucleus"/>
    <property type="evidence" value="ECO:0000250"/>
    <property type="project" value="UniProtKB"/>
</dbReference>
<dbReference type="GO" id="GO:0034719">
    <property type="term" value="C:SMN-Sm protein complex"/>
    <property type="evidence" value="ECO:0000250"/>
    <property type="project" value="UniProtKB"/>
</dbReference>
<dbReference type="GO" id="GO:0005685">
    <property type="term" value="C:U1 snRNP"/>
    <property type="evidence" value="ECO:0000250"/>
    <property type="project" value="UniProtKB"/>
</dbReference>
<dbReference type="GO" id="GO:0071007">
    <property type="term" value="C:U2-type catalytic step 2 spliceosome"/>
    <property type="evidence" value="ECO:0000250"/>
    <property type="project" value="UniProtKB"/>
</dbReference>
<dbReference type="GO" id="GO:0071005">
    <property type="term" value="C:U2-type precatalytic spliceosome"/>
    <property type="evidence" value="ECO:0000250"/>
    <property type="project" value="UniProtKB"/>
</dbReference>
<dbReference type="GO" id="GO:0005684">
    <property type="term" value="C:U2-type spliceosomal complex"/>
    <property type="evidence" value="ECO:0000250"/>
    <property type="project" value="UniProtKB"/>
</dbReference>
<dbReference type="GO" id="GO:0005687">
    <property type="term" value="C:U4 snRNP"/>
    <property type="evidence" value="ECO:0000250"/>
    <property type="project" value="UniProtKB"/>
</dbReference>
<dbReference type="GO" id="GO:0046540">
    <property type="term" value="C:U4/U6 x U5 tri-snRNP complex"/>
    <property type="evidence" value="ECO:0000250"/>
    <property type="project" value="UniProtKB"/>
</dbReference>
<dbReference type="GO" id="GO:0005683">
    <property type="term" value="C:U7 snRNP"/>
    <property type="evidence" value="ECO:0000250"/>
    <property type="project" value="UniProtKB"/>
</dbReference>
<dbReference type="GO" id="GO:0003723">
    <property type="term" value="F:RNA binding"/>
    <property type="evidence" value="ECO:0007669"/>
    <property type="project" value="UniProtKB-KW"/>
</dbReference>
<dbReference type="GO" id="GO:0000398">
    <property type="term" value="P:mRNA splicing, via spliceosome"/>
    <property type="evidence" value="ECO:0000250"/>
    <property type="project" value="UniProtKB"/>
</dbReference>
<dbReference type="GO" id="GO:0000387">
    <property type="term" value="P:spliceosomal snRNP assembly"/>
    <property type="evidence" value="ECO:0000250"/>
    <property type="project" value="UniProtKB"/>
</dbReference>
<dbReference type="CDD" id="cd01717">
    <property type="entry name" value="Sm_B"/>
    <property type="match status" value="1"/>
</dbReference>
<dbReference type="FunFam" id="2.30.30.100:FF:000004">
    <property type="entry name" value="Small nuclear ribonucleoprotein-associated proteins"/>
    <property type="match status" value="1"/>
</dbReference>
<dbReference type="Gene3D" id="2.30.30.100">
    <property type="match status" value="1"/>
</dbReference>
<dbReference type="InterPro" id="IPR010920">
    <property type="entry name" value="LSM_dom_sf"/>
</dbReference>
<dbReference type="InterPro" id="IPR047575">
    <property type="entry name" value="Sm"/>
</dbReference>
<dbReference type="InterPro" id="IPR001163">
    <property type="entry name" value="Sm_dom_euk/arc"/>
</dbReference>
<dbReference type="InterPro" id="IPR017131">
    <property type="entry name" value="snRNP-assoc_SmB/SmN"/>
</dbReference>
<dbReference type="PANTHER" id="PTHR14508">
    <property type="entry name" value="SNRPN UPSTREAM READING FRAME PROTEIN, SNURF"/>
    <property type="match status" value="1"/>
</dbReference>
<dbReference type="PANTHER" id="PTHR14508:SF2">
    <property type="entry name" value="SNRPN UPSTREAM READING FRAME PROTEIN-RELATED"/>
    <property type="match status" value="1"/>
</dbReference>
<dbReference type="Pfam" id="PF01423">
    <property type="entry name" value="LSM"/>
    <property type="match status" value="1"/>
</dbReference>
<dbReference type="PIRSF" id="PIRSF037187">
    <property type="entry name" value="snRNP_SmB/SmN"/>
    <property type="match status" value="1"/>
</dbReference>
<dbReference type="SMART" id="SM00651">
    <property type="entry name" value="Sm"/>
    <property type="match status" value="1"/>
</dbReference>
<dbReference type="SUPFAM" id="SSF50182">
    <property type="entry name" value="Sm-like ribonucleoproteins"/>
    <property type="match status" value="1"/>
</dbReference>
<dbReference type="PROSITE" id="PS52002">
    <property type="entry name" value="SM"/>
    <property type="match status" value="1"/>
</dbReference>
<sequence>MTVGKSSKMLQHIDYRMRCILQDGRIFIGTFKAFDKHMNLILCDCDEFRKIKPKNSKQAEREEKRVLGLVLLRGENLVSMTVEGPPPKDTGIARVPLSGAAGGPGIGRAAGRGVPAGVPMPQAPAGLAGPVRGVGGPSQQVMTPQGRGTVAAAAAAATASIAGAPTQHPPGRGGPPPPMGRGRPPPGMMAPPPGMRPPMGPPTGMPPGRGAPMGIPPPGMRPPPPGMRGPPPPGMRPPRP</sequence>
<proteinExistence type="evidence at transcript level"/>
<name>RSMB_NOTEU</name>
<keyword id="KW-0963">Cytoplasm</keyword>
<keyword id="KW-0488">Methylation</keyword>
<keyword id="KW-0507">mRNA processing</keyword>
<keyword id="KW-0508">mRNA splicing</keyword>
<keyword id="KW-0539">Nucleus</keyword>
<keyword id="KW-0677">Repeat</keyword>
<keyword id="KW-0687">Ribonucleoprotein</keyword>
<keyword id="KW-0694">RNA-binding</keyword>
<keyword id="KW-0747">Spliceosome</keyword>